<comment type="function">
    <text evidence="1 2">Catalyzes the first reaction in the catabolism of the essential branched chain amino acids leucine, isoleucine, and valine (By similarity). May also function as a transporter of branched chain alpha-keto acids (By similarity).</text>
</comment>
<comment type="catalytic activity">
    <reaction evidence="1">
        <text>L-leucine + 2-oxoglutarate = 4-methyl-2-oxopentanoate + L-glutamate</text>
        <dbReference type="Rhea" id="RHEA:18321"/>
        <dbReference type="ChEBI" id="CHEBI:16810"/>
        <dbReference type="ChEBI" id="CHEBI:17865"/>
        <dbReference type="ChEBI" id="CHEBI:29985"/>
        <dbReference type="ChEBI" id="CHEBI:57427"/>
        <dbReference type="EC" id="2.6.1.42"/>
    </reaction>
</comment>
<comment type="catalytic activity">
    <reaction evidence="1">
        <text>L-isoleucine + 2-oxoglutarate = (S)-3-methyl-2-oxopentanoate + L-glutamate</text>
        <dbReference type="Rhea" id="RHEA:24801"/>
        <dbReference type="ChEBI" id="CHEBI:16810"/>
        <dbReference type="ChEBI" id="CHEBI:29985"/>
        <dbReference type="ChEBI" id="CHEBI:35146"/>
        <dbReference type="ChEBI" id="CHEBI:58045"/>
        <dbReference type="EC" id="2.6.1.42"/>
    </reaction>
</comment>
<comment type="catalytic activity">
    <reaction evidence="1">
        <text>L-valine + 2-oxoglutarate = 3-methyl-2-oxobutanoate + L-glutamate</text>
        <dbReference type="Rhea" id="RHEA:24813"/>
        <dbReference type="ChEBI" id="CHEBI:11851"/>
        <dbReference type="ChEBI" id="CHEBI:16810"/>
        <dbReference type="ChEBI" id="CHEBI:29985"/>
        <dbReference type="ChEBI" id="CHEBI:57762"/>
        <dbReference type="EC" id="2.6.1.42"/>
    </reaction>
</comment>
<comment type="cofactor">
    <cofactor evidence="1">
        <name>pyridoxal 5'-phosphate</name>
        <dbReference type="ChEBI" id="CHEBI:597326"/>
    </cofactor>
</comment>
<comment type="subunit">
    <text evidence="1">Homodimer.</text>
</comment>
<comment type="subcellular location">
    <subcellularLocation>
        <location evidence="2">Mitochondrion</location>
    </subcellularLocation>
</comment>
<comment type="similarity">
    <text evidence="3">Belongs to the class-IV pyridoxal-phosphate-dependent aminotransferase family.</text>
</comment>
<protein>
    <recommendedName>
        <fullName>Branched-chain-amino-acid aminotransferase, mitochondrial</fullName>
        <shortName>BCAT(m)</shortName>
        <ecNumber evidence="1">2.6.1.42</ecNumber>
    </recommendedName>
</protein>
<sequence length="31" mass="3517">MAAAALRQIWARKFLPVPWLLCGPRRYASSS</sequence>
<gene>
    <name type="primary">BCAT2</name>
</gene>
<reference key="1">
    <citation type="journal article" date="1997" name="Biochim. Biophys. Acta">
        <title>Cloning of the rat and human mitochondrial branched chain aminotransferases (BCATm).</title>
        <authorList>
            <person name="Bledsoe R.K."/>
            <person name="Dawson P.A."/>
            <person name="Hutson S.M."/>
        </authorList>
    </citation>
    <scope>NUCLEOTIDE SEQUENCE [MRNA]</scope>
</reference>
<name>BCAT2_PIG</name>
<feature type="transit peptide" description="Mitochondrion" evidence="2">
    <location>
        <begin position="1"/>
        <end position="27"/>
    </location>
</feature>
<feature type="chain" id="PRO_0000001273" description="Branched-chain-amino-acid aminotransferase, mitochondrial">
    <location>
        <begin position="28"/>
        <end position="31" status="greater than"/>
    </location>
</feature>
<feature type="non-terminal residue">
    <location>
        <position position="31"/>
    </location>
</feature>
<evidence type="ECO:0000250" key="1">
    <source>
        <dbReference type="UniProtKB" id="O15382"/>
    </source>
</evidence>
<evidence type="ECO:0000250" key="2">
    <source>
        <dbReference type="UniProtKB" id="O35854"/>
    </source>
</evidence>
<evidence type="ECO:0000305" key="3"/>
<dbReference type="EC" id="2.6.1.42" evidence="1"/>
<dbReference type="EMBL" id="U68527">
    <property type="protein sequence ID" value="AAB67675.1"/>
    <property type="molecule type" value="mRNA"/>
</dbReference>
<dbReference type="STRING" id="9823.ENSSSCP00000003396"/>
<dbReference type="PaxDb" id="9823-ENSSSCP00000003397"/>
<dbReference type="eggNOG" id="KOG0975">
    <property type="taxonomic scope" value="Eukaryota"/>
</dbReference>
<dbReference type="HOGENOM" id="CLU_031922_0_3_1"/>
<dbReference type="InParanoid" id="O19098"/>
<dbReference type="Proteomes" id="UP000008227">
    <property type="component" value="Unplaced"/>
</dbReference>
<dbReference type="Proteomes" id="UP000314985">
    <property type="component" value="Unplaced"/>
</dbReference>
<dbReference type="Proteomes" id="UP000694570">
    <property type="component" value="Unplaced"/>
</dbReference>
<dbReference type="Proteomes" id="UP000694571">
    <property type="component" value="Unplaced"/>
</dbReference>
<dbReference type="Proteomes" id="UP000694720">
    <property type="component" value="Unplaced"/>
</dbReference>
<dbReference type="Proteomes" id="UP000694722">
    <property type="component" value="Unplaced"/>
</dbReference>
<dbReference type="Proteomes" id="UP000694723">
    <property type="component" value="Unplaced"/>
</dbReference>
<dbReference type="Proteomes" id="UP000694724">
    <property type="component" value="Unplaced"/>
</dbReference>
<dbReference type="Proteomes" id="UP000694725">
    <property type="component" value="Unplaced"/>
</dbReference>
<dbReference type="Proteomes" id="UP000694726">
    <property type="component" value="Unplaced"/>
</dbReference>
<dbReference type="Proteomes" id="UP000694727">
    <property type="component" value="Unplaced"/>
</dbReference>
<dbReference type="Proteomes" id="UP000694728">
    <property type="component" value="Unplaced"/>
</dbReference>
<dbReference type="GO" id="GO:0005739">
    <property type="term" value="C:mitochondrion"/>
    <property type="evidence" value="ECO:0007669"/>
    <property type="project" value="UniProtKB-SubCell"/>
</dbReference>
<dbReference type="GO" id="GO:0052656">
    <property type="term" value="F:L-isoleucine-2-oxoglutarate transaminase activity"/>
    <property type="evidence" value="ECO:0007669"/>
    <property type="project" value="RHEA"/>
</dbReference>
<dbReference type="GO" id="GO:0052654">
    <property type="term" value="F:L-leucine-2-oxoglutarate transaminase activity"/>
    <property type="evidence" value="ECO:0007669"/>
    <property type="project" value="RHEA"/>
</dbReference>
<dbReference type="GO" id="GO:0052655">
    <property type="term" value="F:L-valine-2-oxoglutarate transaminase activity"/>
    <property type="evidence" value="ECO:0007669"/>
    <property type="project" value="RHEA"/>
</dbReference>
<dbReference type="GO" id="GO:0008652">
    <property type="term" value="P:amino acid biosynthetic process"/>
    <property type="evidence" value="ECO:0007669"/>
    <property type="project" value="UniProtKB-KW"/>
</dbReference>
<dbReference type="GO" id="GO:0009082">
    <property type="term" value="P:branched-chain amino acid biosynthetic process"/>
    <property type="evidence" value="ECO:0007669"/>
    <property type="project" value="UniProtKB-KW"/>
</dbReference>
<dbReference type="GO" id="GO:0006629">
    <property type="term" value="P:lipid metabolic process"/>
    <property type="evidence" value="ECO:0007669"/>
    <property type="project" value="UniProtKB-KW"/>
</dbReference>
<organism>
    <name type="scientific">Sus scrofa</name>
    <name type="common">Pig</name>
    <dbReference type="NCBI Taxonomy" id="9823"/>
    <lineage>
        <taxon>Eukaryota</taxon>
        <taxon>Metazoa</taxon>
        <taxon>Chordata</taxon>
        <taxon>Craniata</taxon>
        <taxon>Vertebrata</taxon>
        <taxon>Euteleostomi</taxon>
        <taxon>Mammalia</taxon>
        <taxon>Eutheria</taxon>
        <taxon>Laurasiatheria</taxon>
        <taxon>Artiodactyla</taxon>
        <taxon>Suina</taxon>
        <taxon>Suidae</taxon>
        <taxon>Sus</taxon>
    </lineage>
</organism>
<keyword id="KW-0028">Amino-acid biosynthesis</keyword>
<keyword id="KW-0032">Aminotransferase</keyword>
<keyword id="KW-0100">Branched-chain amino acid biosynthesis</keyword>
<keyword id="KW-0443">Lipid metabolism</keyword>
<keyword id="KW-0496">Mitochondrion</keyword>
<keyword id="KW-0663">Pyridoxal phosphate</keyword>
<keyword id="KW-1185">Reference proteome</keyword>
<keyword id="KW-0808">Transferase</keyword>
<keyword id="KW-0809">Transit peptide</keyword>
<accession>O19098</accession>
<proteinExistence type="evidence at transcript level"/>